<accession>A2SFN6</accession>
<proteinExistence type="inferred from homology"/>
<sequence>MSITLGHYLSLGAMLFALSVIGIFLNRKNLIVLLMAIELMLLAVNLNFVAFSHYLGDMAGQVFVFFILTVAAAESAIGLAILVVLFRNRSTINVDELDALKG</sequence>
<feature type="chain" id="PRO_0000390117" description="NADH-quinone oxidoreductase subunit K">
    <location>
        <begin position="1"/>
        <end position="102"/>
    </location>
</feature>
<feature type="transmembrane region" description="Helical" evidence="1">
    <location>
        <begin position="5"/>
        <end position="25"/>
    </location>
</feature>
<feature type="transmembrane region" description="Helical" evidence="1">
    <location>
        <begin position="31"/>
        <end position="51"/>
    </location>
</feature>
<feature type="transmembrane region" description="Helical" evidence="1">
    <location>
        <begin position="62"/>
        <end position="82"/>
    </location>
</feature>
<organism>
    <name type="scientific">Methylibium petroleiphilum (strain ATCC BAA-1232 / LMG 22953 / PM1)</name>
    <dbReference type="NCBI Taxonomy" id="420662"/>
    <lineage>
        <taxon>Bacteria</taxon>
        <taxon>Pseudomonadati</taxon>
        <taxon>Pseudomonadota</taxon>
        <taxon>Betaproteobacteria</taxon>
        <taxon>Burkholderiales</taxon>
        <taxon>Sphaerotilaceae</taxon>
        <taxon>Methylibium</taxon>
    </lineage>
</organism>
<keyword id="KW-0997">Cell inner membrane</keyword>
<keyword id="KW-1003">Cell membrane</keyword>
<keyword id="KW-0472">Membrane</keyword>
<keyword id="KW-0520">NAD</keyword>
<keyword id="KW-0874">Quinone</keyword>
<keyword id="KW-1185">Reference proteome</keyword>
<keyword id="KW-1278">Translocase</keyword>
<keyword id="KW-0812">Transmembrane</keyword>
<keyword id="KW-1133">Transmembrane helix</keyword>
<keyword id="KW-0813">Transport</keyword>
<keyword id="KW-0830">Ubiquinone</keyword>
<gene>
    <name evidence="1" type="primary">nuoK</name>
    <name type="ordered locus">Mpe_A1413</name>
</gene>
<reference key="1">
    <citation type="journal article" date="2007" name="J. Bacteriol.">
        <title>Whole-genome analysis of the methyl tert-butyl ether-degrading beta-proteobacterium Methylibium petroleiphilum PM1.</title>
        <authorList>
            <person name="Kane S.R."/>
            <person name="Chakicherla A.Y."/>
            <person name="Chain P.S.G."/>
            <person name="Schmidt R."/>
            <person name="Shin M.W."/>
            <person name="Legler T.C."/>
            <person name="Scow K.M."/>
            <person name="Larimer F.W."/>
            <person name="Lucas S.M."/>
            <person name="Richardson P.M."/>
            <person name="Hristova K.R."/>
        </authorList>
    </citation>
    <scope>NUCLEOTIDE SEQUENCE [LARGE SCALE GENOMIC DNA]</scope>
    <source>
        <strain>ATCC BAA-1232 / LMG 22953 / PM1</strain>
    </source>
</reference>
<name>NUOK_METPP</name>
<dbReference type="EC" id="7.1.1.-" evidence="1"/>
<dbReference type="EMBL" id="CP000555">
    <property type="protein sequence ID" value="ABM94375.1"/>
    <property type="molecule type" value="Genomic_DNA"/>
</dbReference>
<dbReference type="RefSeq" id="WP_011829012.1">
    <property type="nucleotide sequence ID" value="NC_008825.1"/>
</dbReference>
<dbReference type="SMR" id="A2SFN6"/>
<dbReference type="STRING" id="420662.Mpe_A1413"/>
<dbReference type="KEGG" id="mpt:Mpe_A1413"/>
<dbReference type="eggNOG" id="COG0713">
    <property type="taxonomic scope" value="Bacteria"/>
</dbReference>
<dbReference type="HOGENOM" id="CLU_144724_2_0_4"/>
<dbReference type="Proteomes" id="UP000000366">
    <property type="component" value="Chromosome"/>
</dbReference>
<dbReference type="GO" id="GO:0030964">
    <property type="term" value="C:NADH dehydrogenase complex"/>
    <property type="evidence" value="ECO:0007669"/>
    <property type="project" value="TreeGrafter"/>
</dbReference>
<dbReference type="GO" id="GO:0005886">
    <property type="term" value="C:plasma membrane"/>
    <property type="evidence" value="ECO:0007669"/>
    <property type="project" value="UniProtKB-SubCell"/>
</dbReference>
<dbReference type="GO" id="GO:0050136">
    <property type="term" value="F:NADH:ubiquinone reductase (non-electrogenic) activity"/>
    <property type="evidence" value="ECO:0007669"/>
    <property type="project" value="UniProtKB-UniRule"/>
</dbReference>
<dbReference type="GO" id="GO:0048038">
    <property type="term" value="F:quinone binding"/>
    <property type="evidence" value="ECO:0007669"/>
    <property type="project" value="UniProtKB-KW"/>
</dbReference>
<dbReference type="GO" id="GO:0042773">
    <property type="term" value="P:ATP synthesis coupled electron transport"/>
    <property type="evidence" value="ECO:0007669"/>
    <property type="project" value="InterPro"/>
</dbReference>
<dbReference type="FunFam" id="1.10.287.3510:FF:000001">
    <property type="entry name" value="NADH-quinone oxidoreductase subunit K"/>
    <property type="match status" value="1"/>
</dbReference>
<dbReference type="Gene3D" id="1.10.287.3510">
    <property type="match status" value="1"/>
</dbReference>
<dbReference type="HAMAP" id="MF_01456">
    <property type="entry name" value="NDH1_NuoK"/>
    <property type="match status" value="1"/>
</dbReference>
<dbReference type="InterPro" id="IPR001133">
    <property type="entry name" value="NADH_UbQ_OxRdtase_chain4L/K"/>
</dbReference>
<dbReference type="InterPro" id="IPR039428">
    <property type="entry name" value="NUOK/Mnh_C1-like"/>
</dbReference>
<dbReference type="NCBIfam" id="NF004320">
    <property type="entry name" value="PRK05715.1-2"/>
    <property type="match status" value="1"/>
</dbReference>
<dbReference type="NCBIfam" id="NF004321">
    <property type="entry name" value="PRK05715.1-3"/>
    <property type="match status" value="1"/>
</dbReference>
<dbReference type="NCBIfam" id="NF004323">
    <property type="entry name" value="PRK05715.1-5"/>
    <property type="match status" value="1"/>
</dbReference>
<dbReference type="PANTHER" id="PTHR11434:SF21">
    <property type="entry name" value="NADH DEHYDROGENASE SUBUNIT 4L-RELATED"/>
    <property type="match status" value="1"/>
</dbReference>
<dbReference type="PANTHER" id="PTHR11434">
    <property type="entry name" value="NADH-UBIQUINONE OXIDOREDUCTASE SUBUNIT ND4L"/>
    <property type="match status" value="1"/>
</dbReference>
<dbReference type="Pfam" id="PF00420">
    <property type="entry name" value="Oxidored_q2"/>
    <property type="match status" value="1"/>
</dbReference>
<protein>
    <recommendedName>
        <fullName evidence="1">NADH-quinone oxidoreductase subunit K</fullName>
        <ecNumber evidence="1">7.1.1.-</ecNumber>
    </recommendedName>
    <alternativeName>
        <fullName evidence="1">NADH dehydrogenase I subunit K</fullName>
    </alternativeName>
    <alternativeName>
        <fullName evidence="1">NDH-1 subunit K</fullName>
    </alternativeName>
</protein>
<evidence type="ECO:0000255" key="1">
    <source>
        <dbReference type="HAMAP-Rule" id="MF_01456"/>
    </source>
</evidence>
<comment type="function">
    <text evidence="1">NDH-1 shuttles electrons from NADH, via FMN and iron-sulfur (Fe-S) centers, to quinones in the respiratory chain. The immediate electron acceptor for the enzyme in this species is believed to be ubiquinone. Couples the redox reaction to proton translocation (for every two electrons transferred, four hydrogen ions are translocated across the cytoplasmic membrane), and thus conserves the redox energy in a proton gradient.</text>
</comment>
<comment type="catalytic activity">
    <reaction evidence="1">
        <text>a quinone + NADH + 5 H(+)(in) = a quinol + NAD(+) + 4 H(+)(out)</text>
        <dbReference type="Rhea" id="RHEA:57888"/>
        <dbReference type="ChEBI" id="CHEBI:15378"/>
        <dbReference type="ChEBI" id="CHEBI:24646"/>
        <dbReference type="ChEBI" id="CHEBI:57540"/>
        <dbReference type="ChEBI" id="CHEBI:57945"/>
        <dbReference type="ChEBI" id="CHEBI:132124"/>
    </reaction>
</comment>
<comment type="subunit">
    <text evidence="1">NDH-1 is composed of 14 different subunits. Subunits NuoA, H, J, K, L, M, N constitute the membrane sector of the complex.</text>
</comment>
<comment type="subcellular location">
    <subcellularLocation>
        <location evidence="1">Cell inner membrane</location>
        <topology evidence="1">Multi-pass membrane protein</topology>
    </subcellularLocation>
</comment>
<comment type="similarity">
    <text evidence="1">Belongs to the complex I subunit 4L family.</text>
</comment>